<evidence type="ECO:0000250" key="1"/>
<evidence type="ECO:0000250" key="2">
    <source>
        <dbReference type="UniProtKB" id="Q13769"/>
    </source>
</evidence>
<evidence type="ECO:0000256" key="3">
    <source>
        <dbReference type="SAM" id="MobiDB-lite"/>
    </source>
</evidence>
<evidence type="ECO:0000269" key="4">
    <source>
    </source>
</evidence>
<evidence type="ECO:0000305" key="5"/>
<accession>Q7ZXA8</accession>
<name>THO5B_XENLA</name>
<comment type="function">
    <text evidence="2">Component of the THO subcomplex of the TREX complex which is thought to couple mRNA transcription, processing and nuclear export, and which specifically associates with spliced mRNA and not with unspliced pre-mRNA. Plays a key structural role in the oligomerization of the THO-ddx39b complex. TREX is recruited to spliced mRNAs by a transcription-independent mechanism, binds to mRNA upstream of the exon-junction complex (EJC) and is recruited in a splicing- and cap-dependent manner to a region near the 5' end of the mRNA where it functions in mRNA export to the cytoplasm via the TAP/NXF1 pathway. May be involved in cell differentiation.</text>
</comment>
<comment type="subunit">
    <text evidence="2 4">Component of the THO subcomplex, which is composed of thoc1, thoc2, thoc3, thoc5, thoc6 and thoc7 (By similarity). Component of the transcription/export (TREX) complex at least composed of alyref/thoc4, ddx39b, sarnp/cip29, chtop and the THO subcomplex (By similarity). Interacts with thoc7 (PubMed:19059247).</text>
</comment>
<comment type="subcellular location">
    <subcellularLocation>
        <location evidence="1">Nucleus</location>
    </subcellularLocation>
    <subcellularLocation>
        <location evidence="1">Nucleus speckle</location>
    </subcellularLocation>
    <subcellularLocation>
        <location evidence="1">Cytoplasm</location>
    </subcellularLocation>
    <text evidence="1">Shuttles between nucleus and cytoplasm.</text>
</comment>
<comment type="similarity">
    <text evidence="5">Belongs to the THOC5 family.</text>
</comment>
<keyword id="KW-0963">Cytoplasm</keyword>
<keyword id="KW-0221">Differentiation</keyword>
<keyword id="KW-0507">mRNA processing</keyword>
<keyword id="KW-0508">mRNA splicing</keyword>
<keyword id="KW-0509">mRNA transport</keyword>
<keyword id="KW-0539">Nucleus</keyword>
<keyword id="KW-1185">Reference proteome</keyword>
<keyword id="KW-0694">RNA-binding</keyword>
<keyword id="KW-0813">Transport</keyword>
<protein>
    <recommendedName>
        <fullName>THO complex subunit 5 homolog B</fullName>
    </recommendedName>
</protein>
<dbReference type="EMBL" id="BC045075">
    <property type="protein sequence ID" value="AAH45075.1"/>
    <property type="molecule type" value="mRNA"/>
</dbReference>
<dbReference type="RefSeq" id="NP_001080668.1">
    <property type="nucleotide sequence ID" value="NM_001087199.1"/>
</dbReference>
<dbReference type="SMR" id="Q7ZXA8"/>
<dbReference type="DNASU" id="380360"/>
<dbReference type="GeneID" id="380360"/>
<dbReference type="KEGG" id="xla:380360"/>
<dbReference type="AGR" id="Xenbase:XB-GENE-1015173"/>
<dbReference type="CTD" id="380360"/>
<dbReference type="Xenbase" id="XB-GENE-1015173">
    <property type="gene designation" value="thoc5.S"/>
</dbReference>
<dbReference type="OMA" id="EAYCDIV"/>
<dbReference type="OrthoDB" id="20582at2759"/>
<dbReference type="Proteomes" id="UP000186698">
    <property type="component" value="Chromosome 1S"/>
</dbReference>
<dbReference type="Bgee" id="380360">
    <property type="expression patterns" value="Expressed in pancreas and 19 other cell types or tissues"/>
</dbReference>
<dbReference type="GO" id="GO:0005737">
    <property type="term" value="C:cytoplasm"/>
    <property type="evidence" value="ECO:0007669"/>
    <property type="project" value="UniProtKB-SubCell"/>
</dbReference>
<dbReference type="GO" id="GO:0016607">
    <property type="term" value="C:nuclear speck"/>
    <property type="evidence" value="ECO:0007669"/>
    <property type="project" value="UniProtKB-SubCell"/>
</dbReference>
<dbReference type="GO" id="GO:0000445">
    <property type="term" value="C:THO complex part of transcription export complex"/>
    <property type="evidence" value="ECO:0000318"/>
    <property type="project" value="GO_Central"/>
</dbReference>
<dbReference type="GO" id="GO:0003729">
    <property type="term" value="F:mRNA binding"/>
    <property type="evidence" value="ECO:0000318"/>
    <property type="project" value="GO_Central"/>
</dbReference>
<dbReference type="GO" id="GO:0030154">
    <property type="term" value="P:cell differentiation"/>
    <property type="evidence" value="ECO:0007669"/>
    <property type="project" value="UniProtKB-KW"/>
</dbReference>
<dbReference type="GO" id="GO:0006406">
    <property type="term" value="P:mRNA export from nucleus"/>
    <property type="evidence" value="ECO:0000318"/>
    <property type="project" value="GO_Central"/>
</dbReference>
<dbReference type="GO" id="GO:0006397">
    <property type="term" value="P:mRNA processing"/>
    <property type="evidence" value="ECO:0007669"/>
    <property type="project" value="UniProtKB-KW"/>
</dbReference>
<dbReference type="GO" id="GO:0008380">
    <property type="term" value="P:RNA splicing"/>
    <property type="evidence" value="ECO:0007669"/>
    <property type="project" value="UniProtKB-KW"/>
</dbReference>
<dbReference type="InterPro" id="IPR019163">
    <property type="entry name" value="THO_Thoc5"/>
</dbReference>
<dbReference type="PANTHER" id="PTHR13375">
    <property type="entry name" value="FMS INTERACTING PROTEIN"/>
    <property type="match status" value="1"/>
</dbReference>
<dbReference type="PANTHER" id="PTHR13375:SF3">
    <property type="entry name" value="THO COMPLEX SUBUNIT 5 HOMOLOG"/>
    <property type="match status" value="1"/>
</dbReference>
<dbReference type="Pfam" id="PF09766">
    <property type="entry name" value="FmiP_Thoc5"/>
    <property type="match status" value="1"/>
</dbReference>
<reference key="1">
    <citation type="submission" date="2003-01" db="EMBL/GenBank/DDBJ databases">
        <authorList>
            <consortium name="NIH - Xenopus Gene Collection (XGC) project"/>
        </authorList>
    </citation>
    <scope>NUCLEOTIDE SEQUENCE [LARGE SCALE MRNA]</scope>
    <source>
        <tissue>Embryo</tissue>
    </source>
</reference>
<reference key="2">
    <citation type="journal article" date="2009" name="FEBS Lett.">
        <title>Nuclear localization of the pre-mRNA associating protein THOC7 depends upon its direct interaction with Fms tyrosine kinase interacting protein (FMIP).</title>
        <authorList>
            <person name="El Bounkari O."/>
            <person name="Guria A."/>
            <person name="Klebba-Faerber S."/>
            <person name="Claussen M."/>
            <person name="Pieler T."/>
            <person name="Griffiths J.R."/>
            <person name="Whetton A.D."/>
            <person name="Koch A."/>
            <person name="Tamura T."/>
        </authorList>
    </citation>
    <scope>INTERACTION WITH THOC7</scope>
</reference>
<organism>
    <name type="scientific">Xenopus laevis</name>
    <name type="common">African clawed frog</name>
    <dbReference type="NCBI Taxonomy" id="8355"/>
    <lineage>
        <taxon>Eukaryota</taxon>
        <taxon>Metazoa</taxon>
        <taxon>Chordata</taxon>
        <taxon>Craniata</taxon>
        <taxon>Vertebrata</taxon>
        <taxon>Euteleostomi</taxon>
        <taxon>Amphibia</taxon>
        <taxon>Batrachia</taxon>
        <taxon>Anura</taxon>
        <taxon>Pipoidea</taxon>
        <taxon>Pipidae</taxon>
        <taxon>Xenopodinae</taxon>
        <taxon>Xenopus</taxon>
        <taxon>Xenopus</taxon>
    </lineage>
</organism>
<sequence length="678" mass="77763">MSSDSLKKRKPKVNRSEDGKRGRHDEQEGRYYSEEAEVDVRDSREDYQLYKDTCVALQRLMSEIQDLKSKGSKDSAMEIEEKKIQSCVHFMTLKKLNRLANIRLKKARDQTHEAKQKVDAYNLQLQNLLYEVMHLQKEITKCLEFKSKHEEIELVSVEEFYSDAPAAISKPEITSTDPHQQTLSRLDWELEQRKRLAEKYKECLASKEKILKEIEIKKEYLNTLQPQLNSIMQASLPVQEYLSMPFDCMHKQYETARHLPAPLYVLFVQASAYSQACDQKLVVAIEGNVEEARALFKPPEDSQDDESDSDAEEEQTTKRRRPTLGVQLDDKRKEMLKRHPLCVTLTLMCKEGSTLTLTFYFLMNLNILTVKVKIQPAFELSTAISAGDLLNPDLILGCLYQGDDGKTTPNPANKYQFDKIGILSLSDYISELGHPYVWAQTMGGLHFPTDQPQPEFVADNALSASHMEKTIKLLKTRLLSRLSLHRQFASLEHGSIPVSLECQSLFPAKVISRLTKWNVIAYEDYLALPYTKDVVECGLAKETDQYFCLLIERGTAKLNGVVVLNPDYSSVPPVFSLCLNWKGERSSSNDDNIGVMESEVNVYYKELCGPPPGFQLLTNQIQRLCMLLDVYLETERHDNSVEGPHEFPPEKICLRLLRGPSRTKPFKYNYPQGFFSHR</sequence>
<proteinExistence type="evidence at protein level"/>
<feature type="chain" id="PRO_0000310560" description="THO complex subunit 5 homolog B">
    <location>
        <begin position="1"/>
        <end position="678"/>
    </location>
</feature>
<feature type="region of interest" description="Disordered" evidence="3">
    <location>
        <begin position="1"/>
        <end position="37"/>
    </location>
</feature>
<feature type="region of interest" description="Disordered" evidence="3">
    <location>
        <begin position="294"/>
        <end position="329"/>
    </location>
</feature>
<feature type="short sequence motif" description="Nuclear localization signal" evidence="1">
    <location>
        <begin position="7"/>
        <end position="10"/>
    </location>
</feature>
<feature type="compositionally biased region" description="Basic and acidic residues" evidence="3">
    <location>
        <begin position="14"/>
        <end position="37"/>
    </location>
</feature>
<feature type="compositionally biased region" description="Acidic residues" evidence="3">
    <location>
        <begin position="301"/>
        <end position="314"/>
    </location>
</feature>
<gene>
    <name type="primary">thoc5-b</name>
</gene>